<keyword id="KW-0997">Cell inner membrane</keyword>
<keyword id="KW-1003">Cell membrane</keyword>
<keyword id="KW-0406">Ion transport</keyword>
<keyword id="KW-0464">Manganese</keyword>
<keyword id="KW-0472">Membrane</keyword>
<keyword id="KW-0812">Transmembrane</keyword>
<keyword id="KW-1133">Transmembrane helix</keyword>
<keyword id="KW-0813">Transport</keyword>
<sequence length="200" mass="21380">MFVYGSIINPCPTEHVMSVLAISITTVALAEIGDKTQLLSLLLASRYRKPIPIIAAIFLATLANHALAAWLGVVVADYLSPDILKWVLVVSFLTMAGWILIPDKLDGEESISTRGPFVASFIAFFMAEIGDKTQIATSILGAQYADALSWVIVGTTLGMLLANVPVVLIGKLSADKMPLGLIRKVTAGLFLLMALATAFF</sequence>
<comment type="function">
    <text evidence="2">Involved in manganese homeostasis. May function as a manganese exporter.</text>
</comment>
<comment type="subcellular location">
    <subcellularLocation>
        <location evidence="4">Cell inner membrane</location>
        <topology evidence="1">Multi-pass membrane protein</topology>
    </subcellularLocation>
</comment>
<comment type="induction">
    <text evidence="2">Induced by manganese.</text>
</comment>
<comment type="disruption phenotype">
    <text evidence="2">Mutant exhibits sensitivity to manganese but not to other cations. Under high-manganese conditions, the mutant accumulates high levels of intracellular manganese with a concomitant decrease in intracellular iron levels. Mutant also shows a small, but significant, increase in resistance to oxidative stress induced by hydrogen peroxide.</text>
</comment>
<comment type="miscellaneous">
    <text evidence="2">Expression of mneA suppresses the manganese sensitivity of an E.coli mntP mutant.</text>
</comment>
<comment type="similarity">
    <text evidence="4">Belongs to the GDT1 family.</text>
</comment>
<organism>
    <name type="scientific">Vibrio cholerae serotype O1 (strain ATCC 39541 / Classical Ogawa 395 / O395)</name>
    <dbReference type="NCBI Taxonomy" id="345073"/>
    <lineage>
        <taxon>Bacteria</taxon>
        <taxon>Pseudomonadati</taxon>
        <taxon>Pseudomonadota</taxon>
        <taxon>Gammaproteobacteria</taxon>
        <taxon>Vibrionales</taxon>
        <taxon>Vibrionaceae</taxon>
        <taxon>Vibrio</taxon>
    </lineage>
</organism>
<dbReference type="EMBL" id="CP000627">
    <property type="protein sequence ID" value="ABQ20671.1"/>
    <property type="molecule type" value="Genomic_DNA"/>
</dbReference>
<dbReference type="KEGG" id="vco:VC0395_A2497"/>
<dbReference type="KEGG" id="vcr:VC395_0158"/>
<dbReference type="PATRIC" id="fig|345073.21.peg.149"/>
<dbReference type="eggNOG" id="COG2119">
    <property type="taxonomic scope" value="Bacteria"/>
</dbReference>
<dbReference type="Proteomes" id="UP000000249">
    <property type="component" value="Chromosome 2"/>
</dbReference>
<dbReference type="GO" id="GO:0005886">
    <property type="term" value="C:plasma membrane"/>
    <property type="evidence" value="ECO:0007669"/>
    <property type="project" value="UniProtKB-SubCell"/>
</dbReference>
<dbReference type="GO" id="GO:0046873">
    <property type="term" value="F:metal ion transmembrane transporter activity"/>
    <property type="evidence" value="ECO:0007669"/>
    <property type="project" value="InterPro"/>
</dbReference>
<dbReference type="InterPro" id="IPR001727">
    <property type="entry name" value="GDT1-like"/>
</dbReference>
<dbReference type="PANTHER" id="PTHR12608:SF1">
    <property type="entry name" value="TRANSMEMBRANE PROTEIN 165"/>
    <property type="match status" value="1"/>
</dbReference>
<dbReference type="PANTHER" id="PTHR12608">
    <property type="entry name" value="TRANSMEMBRANE PROTEIN HTP-1 RELATED"/>
    <property type="match status" value="1"/>
</dbReference>
<dbReference type="Pfam" id="PF01169">
    <property type="entry name" value="GDT1"/>
    <property type="match status" value="2"/>
</dbReference>
<evidence type="ECO:0000255" key="1"/>
<evidence type="ECO:0000269" key="2">
    <source>
    </source>
</evidence>
<evidence type="ECO:0000303" key="3">
    <source>
    </source>
</evidence>
<evidence type="ECO:0000305" key="4"/>
<evidence type="ECO:0000312" key="5">
    <source>
        <dbReference type="EMBL" id="ABQ20671.1"/>
    </source>
</evidence>
<reference key="1">
    <citation type="submission" date="2007-03" db="EMBL/GenBank/DDBJ databases">
        <authorList>
            <person name="Heidelberg J."/>
        </authorList>
    </citation>
    <scope>NUCLEOTIDE SEQUENCE [LARGE SCALE GENOMIC DNA]</scope>
    <source>
        <strain>ATCC 39541 / Classical Ogawa 395 / O395</strain>
    </source>
</reference>
<reference key="2">
    <citation type="journal article" date="2016" name="J. Bacteriol.">
        <title>Identification and characterization of a putative manganese export protein in Vibrio cholerae.</title>
        <authorList>
            <person name="Fisher C.R."/>
            <person name="Wyckoff E.E."/>
            <person name="Peng E.D."/>
            <person name="Payne S.M."/>
        </authorList>
    </citation>
    <scope>FUNCTION</scope>
    <scope>INDUCTION</scope>
    <scope>DISRUPTION PHENOTYPE</scope>
    <source>
        <strain>ATCC 39541 / Classical Ogawa 395 / O395</strain>
    </source>
</reference>
<proteinExistence type="evidence at transcript level"/>
<protein>
    <recommendedName>
        <fullName evidence="3">Putative manganese exporter</fullName>
    </recommendedName>
    <alternativeName>
        <fullName evidence="3">Manganese exporter A</fullName>
    </alternativeName>
</protein>
<name>MNEA_VIBC3</name>
<feature type="chain" id="PRO_0000439587" description="Putative manganese exporter">
    <location>
        <begin position="1"/>
        <end position="200"/>
    </location>
</feature>
<feature type="transmembrane region" description="Helical" evidence="1">
    <location>
        <begin position="13"/>
        <end position="33"/>
    </location>
</feature>
<feature type="transmembrane region" description="Helical" evidence="1">
    <location>
        <begin position="53"/>
        <end position="73"/>
    </location>
</feature>
<feature type="transmembrane region" description="Helical" evidence="1">
    <location>
        <begin position="81"/>
        <end position="101"/>
    </location>
</feature>
<feature type="transmembrane region" description="Helical" evidence="1">
    <location>
        <begin position="110"/>
        <end position="130"/>
    </location>
</feature>
<feature type="transmembrane region" description="Helical" evidence="1">
    <location>
        <begin position="150"/>
        <end position="170"/>
    </location>
</feature>
<feature type="transmembrane region" description="Helical" evidence="1">
    <location>
        <begin position="180"/>
        <end position="200"/>
    </location>
</feature>
<gene>
    <name evidence="3" type="primary">mneA</name>
    <name evidence="5" type="ordered locus">VC0395_A2497</name>
</gene>
<accession>A0A0H3AJF5</accession>